<gene>
    <name type="primary">MT2A</name>
</gene>
<name>MT2_PIG</name>
<reference key="1">
    <citation type="journal article" date="1998" name="Gene">
        <title>Multiple isoforms of metallothionein are expressed in the porcine liver.</title>
        <authorList>
            <person name="Huang M.-C."/>
            <person name="Pan P.K."/>
            <person name="Zheng T.F."/>
            <person name="Chen N.C."/>
            <person name="Peng J.Y."/>
            <person name="Huang P.C."/>
        </authorList>
    </citation>
    <scope>NUCLEOTIDE SEQUENCE [MRNA]</scope>
    <source>
        <tissue>Liver</tissue>
    </source>
</reference>
<evidence type="ECO:0000250" key="1">
    <source>
        <dbReference type="UniProtKB" id="P02795"/>
    </source>
</evidence>
<evidence type="ECO:0000250" key="2">
    <source>
        <dbReference type="UniProtKB" id="P18055"/>
    </source>
</evidence>
<evidence type="ECO:0000305" key="3"/>
<accession>P79379</accession>
<proteinExistence type="inferred from homology"/>
<protein>
    <recommendedName>
        <fullName>Metallothionein-2A</fullName>
        <shortName>MT-2A</shortName>
    </recommendedName>
    <alternativeName>
        <fullName>Metallothionein-IIA</fullName>
        <shortName>MT-IIA</shortName>
    </alternativeName>
</protein>
<dbReference type="EMBL" id="AB000794">
    <property type="protein sequence ID" value="BAA19183.1"/>
    <property type="molecule type" value="mRNA"/>
</dbReference>
<dbReference type="SMR" id="P79379"/>
<dbReference type="STRING" id="9823.ENSSSCP00000022537"/>
<dbReference type="PaxDb" id="9823-ENSSSCP00000022537"/>
<dbReference type="PeptideAtlas" id="P79379"/>
<dbReference type="Ensembl" id="ENSSSCT00000029059.4">
    <property type="protein sequence ID" value="ENSSSCP00000022537.1"/>
    <property type="gene ID" value="ENSSSCG00000030300.4"/>
</dbReference>
<dbReference type="Ensembl" id="ENSSSCT00015013884.1">
    <property type="protein sequence ID" value="ENSSSCP00015005387.1"/>
    <property type="gene ID" value="ENSSSCG00015010574.1"/>
</dbReference>
<dbReference type="Ensembl" id="ENSSSCT00025104572.1">
    <property type="protein sequence ID" value="ENSSSCP00025046512.1"/>
    <property type="gene ID" value="ENSSSCG00025075743.1"/>
</dbReference>
<dbReference type="Ensembl" id="ENSSSCT00030080241.1">
    <property type="protein sequence ID" value="ENSSSCP00030036757.1"/>
    <property type="gene ID" value="ENSSSCG00030057548.1"/>
</dbReference>
<dbReference type="Ensembl" id="ENSSSCT00035076496.1">
    <property type="protein sequence ID" value="ENSSSCP00035031255.1"/>
    <property type="gene ID" value="ENSSSCG00035057202.1"/>
</dbReference>
<dbReference type="Ensembl" id="ENSSSCT00040035994.1">
    <property type="protein sequence ID" value="ENSSSCP00040014920.1"/>
    <property type="gene ID" value="ENSSSCG00040026909.1"/>
</dbReference>
<dbReference type="Ensembl" id="ENSSSCT00045057812.1">
    <property type="protein sequence ID" value="ENSSSCP00045040423.1"/>
    <property type="gene ID" value="ENSSSCG00045033767.1"/>
</dbReference>
<dbReference type="Ensembl" id="ENSSSCT00050060894.1">
    <property type="protein sequence ID" value="ENSSSCP00050026179.1"/>
    <property type="gene ID" value="ENSSSCG00050044734.1"/>
</dbReference>
<dbReference type="Ensembl" id="ENSSSCT00060099893.1">
    <property type="protein sequence ID" value="ENSSSCP00060043336.1"/>
    <property type="gene ID" value="ENSSSCG00060073107.1"/>
</dbReference>
<dbReference type="Ensembl" id="ENSSSCT00065104451.1">
    <property type="protein sequence ID" value="ENSSSCP00065046298.1"/>
    <property type="gene ID" value="ENSSSCG00065075661.1"/>
</dbReference>
<dbReference type="Ensembl" id="ENSSSCT00070000714.1">
    <property type="protein sequence ID" value="ENSSSCP00070000625.1"/>
    <property type="gene ID" value="ENSSSCG00070000389.1"/>
</dbReference>
<dbReference type="Ensembl" id="ENSSSCT00085023745">
    <property type="protein sequence ID" value="ENSSSCP00085016282"/>
    <property type="gene ID" value="ENSSSCG00085012664"/>
</dbReference>
<dbReference type="Ensembl" id="ENSSSCT00105064541">
    <property type="protein sequence ID" value="ENSSSCP00105045934"/>
    <property type="gene ID" value="ENSSSCG00105033848"/>
</dbReference>
<dbReference type="Ensembl" id="ENSSSCT00110037951">
    <property type="protein sequence ID" value="ENSSSCP00110026101"/>
    <property type="gene ID" value="ENSSSCG00110019781"/>
</dbReference>
<dbReference type="Ensembl" id="ENSSSCT00115032337">
    <property type="protein sequence ID" value="ENSSSCP00115030737"/>
    <property type="gene ID" value="ENSSSCG00115018278"/>
</dbReference>
<dbReference type="Ensembl" id="ENSSSCT00130016636">
    <property type="protein sequence ID" value="ENSSSCP00130011312"/>
    <property type="gene ID" value="ENSSSCG00130008967"/>
</dbReference>
<dbReference type="GeneID" id="396827"/>
<dbReference type="KEGG" id="ssc:396827"/>
<dbReference type="CTD" id="396827"/>
<dbReference type="eggNOG" id="KOG4738">
    <property type="taxonomic scope" value="Eukaryota"/>
</dbReference>
<dbReference type="GeneTree" id="ENSGT00950000182967"/>
<dbReference type="HOGENOM" id="CLU_171204_2_0_1"/>
<dbReference type="InParanoid" id="P79379"/>
<dbReference type="OMA" id="KECKCSS"/>
<dbReference type="TreeFam" id="TF336054"/>
<dbReference type="Reactome" id="R-SSC-5661231">
    <property type="pathway name" value="Metallothioneins bind metals"/>
</dbReference>
<dbReference type="Proteomes" id="UP000008227">
    <property type="component" value="Chromosome 6"/>
</dbReference>
<dbReference type="Proteomes" id="UP000314985">
    <property type="component" value="Chromosome 6"/>
</dbReference>
<dbReference type="Proteomes" id="UP000694570">
    <property type="component" value="Unplaced"/>
</dbReference>
<dbReference type="Proteomes" id="UP000694571">
    <property type="component" value="Unplaced"/>
</dbReference>
<dbReference type="Proteomes" id="UP000694720">
    <property type="component" value="Unplaced"/>
</dbReference>
<dbReference type="Proteomes" id="UP000694722">
    <property type="component" value="Unplaced"/>
</dbReference>
<dbReference type="Proteomes" id="UP000694723">
    <property type="component" value="Unplaced"/>
</dbReference>
<dbReference type="Proteomes" id="UP000694724">
    <property type="component" value="Unplaced"/>
</dbReference>
<dbReference type="Proteomes" id="UP000694725">
    <property type="component" value="Unplaced"/>
</dbReference>
<dbReference type="Proteomes" id="UP000694726">
    <property type="component" value="Unplaced"/>
</dbReference>
<dbReference type="Proteomes" id="UP000694727">
    <property type="component" value="Unplaced"/>
</dbReference>
<dbReference type="Proteomes" id="UP000694728">
    <property type="component" value="Unplaced"/>
</dbReference>
<dbReference type="Bgee" id="ENSSSCG00000030300">
    <property type="expression patterns" value="Expressed in right lobe of liver and 44 other cell types or tissues"/>
</dbReference>
<dbReference type="GO" id="GO:0005737">
    <property type="term" value="C:cytoplasm"/>
    <property type="evidence" value="ECO:0000250"/>
    <property type="project" value="UniProtKB"/>
</dbReference>
<dbReference type="GO" id="GO:0005634">
    <property type="term" value="C:nucleus"/>
    <property type="evidence" value="ECO:0000250"/>
    <property type="project" value="UniProtKB"/>
</dbReference>
<dbReference type="GO" id="GO:0046872">
    <property type="term" value="F:metal ion binding"/>
    <property type="evidence" value="ECO:0000318"/>
    <property type="project" value="GO_Central"/>
</dbReference>
<dbReference type="GO" id="GO:0008270">
    <property type="term" value="F:zinc ion binding"/>
    <property type="evidence" value="ECO:0000250"/>
    <property type="project" value="UniProtKB"/>
</dbReference>
<dbReference type="GO" id="GO:0071276">
    <property type="term" value="P:cellular response to cadmium ion"/>
    <property type="evidence" value="ECO:0000318"/>
    <property type="project" value="GO_Central"/>
</dbReference>
<dbReference type="GO" id="GO:0071280">
    <property type="term" value="P:cellular response to copper ion"/>
    <property type="evidence" value="ECO:0000318"/>
    <property type="project" value="GO_Central"/>
</dbReference>
<dbReference type="GO" id="GO:0036018">
    <property type="term" value="P:cellular response to erythropoietin"/>
    <property type="evidence" value="ECO:0007669"/>
    <property type="project" value="Ensembl"/>
</dbReference>
<dbReference type="GO" id="GO:0071294">
    <property type="term" value="P:cellular response to zinc ion"/>
    <property type="evidence" value="ECO:0000250"/>
    <property type="project" value="UniProtKB"/>
</dbReference>
<dbReference type="GO" id="GO:0010273">
    <property type="term" value="P:detoxification of copper ion"/>
    <property type="evidence" value="ECO:0000318"/>
    <property type="project" value="GO_Central"/>
</dbReference>
<dbReference type="GO" id="GO:0006882">
    <property type="term" value="P:intracellular zinc ion homeostasis"/>
    <property type="evidence" value="ECO:0000318"/>
    <property type="project" value="GO_Central"/>
</dbReference>
<dbReference type="GO" id="GO:0045926">
    <property type="term" value="P:negative regulation of growth"/>
    <property type="evidence" value="ECO:0000250"/>
    <property type="project" value="UniProtKB"/>
</dbReference>
<dbReference type="FunFam" id="4.10.10.10:FF:000001">
    <property type="entry name" value="Metallothionein"/>
    <property type="match status" value="1"/>
</dbReference>
<dbReference type="Gene3D" id="4.10.10.10">
    <property type="entry name" value="Metallothionein Isoform II"/>
    <property type="match status" value="1"/>
</dbReference>
<dbReference type="InterPro" id="IPR017854">
    <property type="entry name" value="Metalthion_dom_sf"/>
</dbReference>
<dbReference type="InterPro" id="IPR023587">
    <property type="entry name" value="Metalthion_dom_sf_vert"/>
</dbReference>
<dbReference type="InterPro" id="IPR000006">
    <property type="entry name" value="Metalthion_vert"/>
</dbReference>
<dbReference type="InterPro" id="IPR018064">
    <property type="entry name" value="Metalthion_vert_metal_BS"/>
</dbReference>
<dbReference type="PANTHER" id="PTHR23299">
    <property type="entry name" value="METALLOTHIONEIN"/>
    <property type="match status" value="1"/>
</dbReference>
<dbReference type="PANTHER" id="PTHR23299:SF38">
    <property type="entry name" value="METALLOTHIONEIN-2B"/>
    <property type="match status" value="1"/>
</dbReference>
<dbReference type="Pfam" id="PF00131">
    <property type="entry name" value="Metallothio"/>
    <property type="match status" value="1"/>
</dbReference>
<dbReference type="PRINTS" id="PR00860">
    <property type="entry name" value="MTVERTEBRATE"/>
</dbReference>
<dbReference type="SUPFAM" id="SSF57868">
    <property type="entry name" value="Metallothionein"/>
    <property type="match status" value="1"/>
</dbReference>
<dbReference type="PROSITE" id="PS00203">
    <property type="entry name" value="METALLOTHIONEIN_VRT"/>
    <property type="match status" value="1"/>
</dbReference>
<organism>
    <name type="scientific">Sus scrofa</name>
    <name type="common">Pig</name>
    <dbReference type="NCBI Taxonomy" id="9823"/>
    <lineage>
        <taxon>Eukaryota</taxon>
        <taxon>Metazoa</taxon>
        <taxon>Chordata</taxon>
        <taxon>Craniata</taxon>
        <taxon>Vertebrata</taxon>
        <taxon>Euteleostomi</taxon>
        <taxon>Mammalia</taxon>
        <taxon>Eutheria</taxon>
        <taxon>Laurasiatheria</taxon>
        <taxon>Artiodactyla</taxon>
        <taxon>Suina</taxon>
        <taxon>Suidae</taxon>
        <taxon>Sus</taxon>
    </lineage>
</organism>
<sequence>MDPNCSCAAGGSCTCAGSCKCKDCKCTSCKKSCCSCCPVGCAKCAQGCICKGASDKCSCCA</sequence>
<feature type="chain" id="PRO_0000197213" description="Metallothionein-2A">
    <location>
        <begin position="1"/>
        <end position="61"/>
    </location>
</feature>
<feature type="region of interest" description="Beta">
    <location>
        <begin position="1"/>
        <end position="29"/>
    </location>
</feature>
<feature type="region of interest" description="Alpha">
    <location>
        <begin position="30"/>
        <end position="61"/>
    </location>
</feature>
<feature type="binding site" evidence="1">
    <location>
        <position position="5"/>
    </location>
    <ligand>
        <name>a divalent metal cation</name>
        <dbReference type="ChEBI" id="CHEBI:60240"/>
        <label>1</label>
        <note>in cluster B</note>
    </ligand>
</feature>
<feature type="binding site" evidence="1">
    <location>
        <position position="7"/>
    </location>
    <ligand>
        <name>a divalent metal cation</name>
        <dbReference type="ChEBI" id="CHEBI:60240"/>
        <label>1</label>
        <note>in cluster B</note>
    </ligand>
</feature>
<feature type="binding site" evidence="1">
    <location>
        <position position="7"/>
    </location>
    <ligand>
        <name>a divalent metal cation</name>
        <dbReference type="ChEBI" id="CHEBI:60240"/>
        <label>2</label>
        <note>in cluster B</note>
    </ligand>
</feature>
<feature type="binding site" evidence="1">
    <location>
        <position position="13"/>
    </location>
    <ligand>
        <name>a divalent metal cation</name>
        <dbReference type="ChEBI" id="CHEBI:60240"/>
        <label>2</label>
        <note>in cluster B</note>
    </ligand>
</feature>
<feature type="binding site" evidence="1">
    <location>
        <position position="15"/>
    </location>
    <ligand>
        <name>a divalent metal cation</name>
        <dbReference type="ChEBI" id="CHEBI:60240"/>
        <label>2</label>
        <note>in cluster B</note>
    </ligand>
</feature>
<feature type="binding site" evidence="1">
    <location>
        <position position="15"/>
    </location>
    <ligand>
        <name>a divalent metal cation</name>
        <dbReference type="ChEBI" id="CHEBI:60240"/>
        <label>3</label>
        <note>in cluster B</note>
    </ligand>
</feature>
<feature type="binding site" evidence="1">
    <location>
        <position position="19"/>
    </location>
    <ligand>
        <name>a divalent metal cation</name>
        <dbReference type="ChEBI" id="CHEBI:60240"/>
        <label>3</label>
        <note>in cluster B</note>
    </ligand>
</feature>
<feature type="binding site" evidence="1">
    <location>
        <position position="21"/>
    </location>
    <ligand>
        <name>a divalent metal cation</name>
        <dbReference type="ChEBI" id="CHEBI:60240"/>
        <label>1</label>
        <note>in cluster B</note>
    </ligand>
</feature>
<feature type="binding site" evidence="1">
    <location>
        <position position="24"/>
    </location>
    <ligand>
        <name>a divalent metal cation</name>
        <dbReference type="ChEBI" id="CHEBI:60240"/>
        <label>1</label>
        <note>in cluster B</note>
    </ligand>
</feature>
<feature type="binding site" evidence="1">
    <location>
        <position position="24"/>
    </location>
    <ligand>
        <name>a divalent metal cation</name>
        <dbReference type="ChEBI" id="CHEBI:60240"/>
        <label>3</label>
        <note>in cluster B</note>
    </ligand>
</feature>
<feature type="binding site" evidence="1">
    <location>
        <position position="26"/>
    </location>
    <ligand>
        <name>a divalent metal cation</name>
        <dbReference type="ChEBI" id="CHEBI:60240"/>
        <label>2</label>
        <note>in cluster B</note>
    </ligand>
</feature>
<feature type="binding site" evidence="1">
    <location>
        <position position="29"/>
    </location>
    <ligand>
        <name>a divalent metal cation</name>
        <dbReference type="ChEBI" id="CHEBI:60240"/>
        <label>3</label>
        <note>in cluster B</note>
    </ligand>
</feature>
<feature type="binding site" evidence="1">
    <location>
        <position position="33"/>
    </location>
    <ligand>
        <name>a divalent metal cation</name>
        <dbReference type="ChEBI" id="CHEBI:60240"/>
        <label>4</label>
        <note>in cluster A</note>
    </ligand>
</feature>
<feature type="binding site" evidence="1">
    <location>
        <position position="34"/>
    </location>
    <ligand>
        <name>a divalent metal cation</name>
        <dbReference type="ChEBI" id="CHEBI:60240"/>
        <label>4</label>
        <note>in cluster A</note>
    </ligand>
</feature>
<feature type="binding site" evidence="1">
    <location>
        <position position="34"/>
    </location>
    <ligand>
        <name>a divalent metal cation</name>
        <dbReference type="ChEBI" id="CHEBI:60240"/>
        <label>5</label>
        <note>in cluster A</note>
    </ligand>
</feature>
<feature type="binding site" evidence="1">
    <location>
        <position position="36"/>
    </location>
    <ligand>
        <name>a divalent metal cation</name>
        <dbReference type="ChEBI" id="CHEBI:60240"/>
        <label>5</label>
        <note>in cluster A</note>
    </ligand>
</feature>
<feature type="binding site" evidence="1">
    <location>
        <position position="37"/>
    </location>
    <ligand>
        <name>a divalent metal cation</name>
        <dbReference type="ChEBI" id="CHEBI:60240"/>
        <label>5</label>
        <note>in cluster A</note>
    </ligand>
</feature>
<feature type="binding site" evidence="1">
    <location>
        <position position="37"/>
    </location>
    <ligand>
        <name>a divalent metal cation</name>
        <dbReference type="ChEBI" id="CHEBI:60240"/>
        <label>6</label>
        <note>in cluster A</note>
    </ligand>
</feature>
<feature type="binding site" evidence="1">
    <location>
        <position position="41"/>
    </location>
    <ligand>
        <name>a divalent metal cation</name>
        <dbReference type="ChEBI" id="CHEBI:60240"/>
        <label>6</label>
        <note>in cluster A</note>
    </ligand>
</feature>
<feature type="binding site" evidence="1">
    <location>
        <position position="44"/>
    </location>
    <ligand>
        <name>a divalent metal cation</name>
        <dbReference type="ChEBI" id="CHEBI:60240"/>
        <label>4</label>
        <note>in cluster A</note>
    </ligand>
</feature>
<feature type="binding site" evidence="1">
    <location>
        <position position="44"/>
    </location>
    <ligand>
        <name>a divalent metal cation</name>
        <dbReference type="ChEBI" id="CHEBI:60240"/>
        <label>6</label>
        <note>in cluster A</note>
    </ligand>
</feature>
<feature type="binding site" evidence="1">
    <location>
        <position position="48"/>
    </location>
    <ligand>
        <name>a divalent metal cation</name>
        <dbReference type="ChEBI" id="CHEBI:60240"/>
        <label>4</label>
        <note>in cluster A</note>
    </ligand>
</feature>
<feature type="binding site" evidence="1">
    <location>
        <position position="50"/>
    </location>
    <ligand>
        <name>a divalent metal cation</name>
        <dbReference type="ChEBI" id="CHEBI:60240"/>
        <label>5</label>
        <note>in cluster A</note>
    </ligand>
</feature>
<feature type="binding site" evidence="1">
    <location>
        <position position="50"/>
    </location>
    <ligand>
        <name>a divalent metal cation</name>
        <dbReference type="ChEBI" id="CHEBI:60240"/>
        <label>7</label>
        <note>in cluster A</note>
    </ligand>
</feature>
<feature type="binding site" evidence="1">
    <location>
        <position position="57"/>
    </location>
    <ligand>
        <name>a divalent metal cation</name>
        <dbReference type="ChEBI" id="CHEBI:60240"/>
        <label>7</label>
        <note>in cluster A</note>
    </ligand>
</feature>
<feature type="binding site" evidence="1">
    <location>
        <position position="59"/>
    </location>
    <ligand>
        <name>a divalent metal cation</name>
        <dbReference type="ChEBI" id="CHEBI:60240"/>
        <label>7</label>
        <note>in cluster A</note>
    </ligand>
</feature>
<feature type="binding site" evidence="1">
    <location>
        <position position="60"/>
    </location>
    <ligand>
        <name>a divalent metal cation</name>
        <dbReference type="ChEBI" id="CHEBI:60240"/>
        <label>6</label>
        <note>in cluster A</note>
    </ligand>
</feature>
<feature type="binding site" evidence="1">
    <location>
        <position position="60"/>
    </location>
    <ligand>
        <name>a divalent metal cation</name>
        <dbReference type="ChEBI" id="CHEBI:60240"/>
        <label>7</label>
        <note>in cluster A</note>
    </ligand>
</feature>
<feature type="modified residue" description="N-acetylmethionine" evidence="2">
    <location>
        <position position="1"/>
    </location>
</feature>
<feature type="modified residue" description="Phosphoserine" evidence="1">
    <location>
        <position position="58"/>
    </location>
</feature>
<comment type="function">
    <text>Metallothioneins have a high content of cysteine residues that bind various heavy metals; these proteins are transcriptionally regulated by both heavy metals and glucocorticoids.</text>
</comment>
<comment type="subunit">
    <text evidence="1">Interacts with EOLA1.</text>
</comment>
<comment type="domain">
    <text>Class I metallothioneins contain 2 metal-binding domains: four divalent ions are chelated within cluster A of the alpha domain and are coordinated via cysteinyl thiolate bridges to 11 cysteine ligands. Cluster B, the corresponding region within the beta domain, can ligate three divalent ions to 9 cysteines.</text>
</comment>
<comment type="similarity">
    <text evidence="3">Belongs to the metallothionein superfamily. Type 1 family.</text>
</comment>
<keyword id="KW-0007">Acetylation</keyword>
<keyword id="KW-0479">Metal-binding</keyword>
<keyword id="KW-0480">Metal-thiolate cluster</keyword>
<keyword id="KW-0597">Phosphoprotein</keyword>
<keyword id="KW-1185">Reference proteome</keyword>